<gene>
    <name evidence="9" type="primary">Igf1</name>
    <name evidence="2" type="synonym">Igf-1</name>
</gene>
<protein>
    <recommendedName>
        <fullName evidence="9">Insulin-like growth factor 1</fullName>
    </recommendedName>
    <alternativeName>
        <fullName evidence="7">Insulin-like growth factor I</fullName>
        <shortName evidence="7">IGF-I</shortName>
    </alternativeName>
    <alternativeName>
        <fullName>Somatomedin</fullName>
    </alternativeName>
</protein>
<organism>
    <name type="scientific">Rattus norvegicus</name>
    <name type="common">Rat</name>
    <dbReference type="NCBI Taxonomy" id="10116"/>
    <lineage>
        <taxon>Eukaryota</taxon>
        <taxon>Metazoa</taxon>
        <taxon>Chordata</taxon>
        <taxon>Craniata</taxon>
        <taxon>Vertebrata</taxon>
        <taxon>Euteleostomi</taxon>
        <taxon>Mammalia</taxon>
        <taxon>Eutheria</taxon>
        <taxon>Euarchontoglires</taxon>
        <taxon>Glires</taxon>
        <taxon>Rodentia</taxon>
        <taxon>Myomorpha</taxon>
        <taxon>Muroidea</taxon>
        <taxon>Muridae</taxon>
        <taxon>Murinae</taxon>
        <taxon>Rattus</taxon>
    </lineage>
</organism>
<dbReference type="EMBL" id="M15651">
    <property type="protein sequence ID" value="AAA41215.1"/>
    <property type="molecule type" value="Genomic_DNA"/>
</dbReference>
<dbReference type="EMBL" id="M15647">
    <property type="protein sequence ID" value="AAA41215.1"/>
    <property type="status" value="JOINED"/>
    <property type="molecule type" value="Genomic_DNA"/>
</dbReference>
<dbReference type="EMBL" id="M15648">
    <property type="protein sequence ID" value="AAA41215.1"/>
    <property type="status" value="JOINED"/>
    <property type="molecule type" value="Genomic_DNA"/>
</dbReference>
<dbReference type="EMBL" id="M15649">
    <property type="protein sequence ID" value="AAA41215.1"/>
    <property type="status" value="JOINED"/>
    <property type="molecule type" value="Genomic_DNA"/>
</dbReference>
<dbReference type="EMBL" id="M15650">
    <property type="protein sequence ID" value="AAA41214.1"/>
    <property type="molecule type" value="Genomic_DNA"/>
</dbReference>
<dbReference type="EMBL" id="M15647">
    <property type="protein sequence ID" value="AAA41214.1"/>
    <property type="status" value="JOINED"/>
    <property type="molecule type" value="Genomic_DNA"/>
</dbReference>
<dbReference type="EMBL" id="M15648">
    <property type="protein sequence ID" value="AAA41214.1"/>
    <property type="status" value="JOINED"/>
    <property type="molecule type" value="Genomic_DNA"/>
</dbReference>
<dbReference type="EMBL" id="M15649">
    <property type="protein sequence ID" value="AAA41214.1"/>
    <property type="status" value="JOINED"/>
    <property type="molecule type" value="Genomic_DNA"/>
</dbReference>
<dbReference type="EMBL" id="M17335">
    <property type="protein sequence ID" value="AAA41386.1"/>
    <property type="status" value="ALT_INIT"/>
    <property type="molecule type" value="mRNA"/>
</dbReference>
<dbReference type="EMBL" id="M15480">
    <property type="protein sequence ID" value="AAA41385.1"/>
    <property type="status" value="ALT_INIT"/>
    <property type="molecule type" value="mRNA"/>
</dbReference>
<dbReference type="EMBL" id="M15481">
    <property type="protein sequence ID" value="AAA41387.1"/>
    <property type="status" value="ALT_INIT"/>
    <property type="molecule type" value="mRNA"/>
</dbReference>
<dbReference type="EMBL" id="X06107">
    <property type="protein sequence ID" value="CAA29480.1"/>
    <property type="molecule type" value="mRNA"/>
</dbReference>
<dbReference type="EMBL" id="X06043">
    <property type="protein sequence ID" value="CAA29436.1"/>
    <property type="molecule type" value="mRNA"/>
</dbReference>
<dbReference type="PIR" id="A27804">
    <property type="entry name" value="A27804"/>
</dbReference>
<dbReference type="PIR" id="A40912">
    <property type="entry name" value="A40912"/>
</dbReference>
<dbReference type="PIR" id="B27804">
    <property type="entry name" value="B27804"/>
</dbReference>
<dbReference type="RefSeq" id="NP_001075946.2">
    <property type="nucleotide sequence ID" value="NM_001082477.2"/>
</dbReference>
<dbReference type="RefSeq" id="NP_001075947.1">
    <property type="nucleotide sequence ID" value="NM_001082478.1"/>
</dbReference>
<dbReference type="RefSeq" id="NP_001075948.1">
    <molecule id="P08025-1"/>
    <property type="nucleotide sequence ID" value="NM_001082479.1"/>
</dbReference>
<dbReference type="RefSeq" id="XP_006241253.1">
    <property type="nucleotide sequence ID" value="XM_006241191.2"/>
</dbReference>
<dbReference type="RefSeq" id="XP_006241254.1">
    <property type="nucleotide sequence ID" value="XM_006241192.1"/>
</dbReference>
<dbReference type="RefSeq" id="XP_006241255.1">
    <molecule id="P08025-1"/>
    <property type="nucleotide sequence ID" value="XM_006241193.5"/>
</dbReference>
<dbReference type="RefSeq" id="XP_063119052.1">
    <molecule id="P08025-1"/>
    <property type="nucleotide sequence ID" value="XM_063262982.1"/>
</dbReference>
<dbReference type="SMR" id="P08025"/>
<dbReference type="FunCoup" id="P08025">
    <property type="interactions" value="896"/>
</dbReference>
<dbReference type="STRING" id="10116.ENSRNOP00000073824"/>
<dbReference type="GlyGen" id="P08025">
    <property type="glycosylation" value="2 sites"/>
</dbReference>
<dbReference type="iPTMnet" id="P08025"/>
<dbReference type="PhosphoSitePlus" id="P08025"/>
<dbReference type="PaxDb" id="10116-ENSRNOP00000005995"/>
<dbReference type="ABCD" id="P08025">
    <property type="antibodies" value="1 sequenced antibody"/>
</dbReference>
<dbReference type="Ensembl" id="ENSRNOT00000118307.1">
    <molecule id="P08025-1"/>
    <property type="protein sequence ID" value="ENSRNOP00000097781.1"/>
    <property type="gene ID" value="ENSRNOG00000004517.9"/>
</dbReference>
<dbReference type="GeneID" id="24482"/>
<dbReference type="KEGG" id="rno:24482"/>
<dbReference type="AGR" id="RGD:2868"/>
<dbReference type="CTD" id="3479"/>
<dbReference type="RGD" id="2868">
    <property type="gene designation" value="Igf1"/>
</dbReference>
<dbReference type="eggNOG" id="ENOG502RCAB">
    <property type="taxonomic scope" value="Eukaryota"/>
</dbReference>
<dbReference type="GeneTree" id="ENSGT00940000159081"/>
<dbReference type="HOGENOM" id="CLU_123939_0_0_1"/>
<dbReference type="InParanoid" id="P08025"/>
<dbReference type="OMA" id="TLLFKCC"/>
<dbReference type="OrthoDB" id="8936076at2759"/>
<dbReference type="PhylomeDB" id="P08025"/>
<dbReference type="TreeFam" id="TF332820"/>
<dbReference type="Reactome" id="R-RNO-114608">
    <property type="pathway name" value="Platelet degranulation"/>
</dbReference>
<dbReference type="Reactome" id="R-RNO-2404192">
    <property type="pathway name" value="Signaling by Type 1 Insulin-like Growth Factor 1 Receptor (IGF1R)"/>
</dbReference>
<dbReference type="Reactome" id="R-RNO-2428928">
    <property type="pathway name" value="IRS-related events triggered by IGF1R"/>
</dbReference>
<dbReference type="Reactome" id="R-RNO-2428933">
    <property type="pathway name" value="SHC-related events triggered by IGF1R"/>
</dbReference>
<dbReference type="Reactome" id="R-RNO-381426">
    <property type="pathway name" value="Regulation of Insulin-like Growth Factor (IGF) transport and uptake by Insulin-like Growth Factor Binding Proteins (IGFBPs)"/>
</dbReference>
<dbReference type="Reactome" id="R-RNO-422085">
    <property type="pathway name" value="Synthesis, secretion, and deacylation of Ghrelin"/>
</dbReference>
<dbReference type="PRO" id="PR:P08025"/>
<dbReference type="Proteomes" id="UP000002494">
    <property type="component" value="Chromosome 7"/>
</dbReference>
<dbReference type="Bgee" id="ENSRNOG00000004517">
    <property type="expression patterns" value="Expressed in liver and 19 other cell types or tissues"/>
</dbReference>
<dbReference type="ExpressionAtlas" id="P08025">
    <property type="expression patterns" value="baseline and differential"/>
</dbReference>
<dbReference type="GO" id="GO:0035867">
    <property type="term" value="C:alphav-beta3 integrin-IGF-1-IGF1R complex"/>
    <property type="evidence" value="ECO:0000250"/>
    <property type="project" value="UniProtKB"/>
</dbReference>
<dbReference type="GO" id="GO:0070382">
    <property type="term" value="C:exocytic vesicle"/>
    <property type="evidence" value="ECO:0000250"/>
    <property type="project" value="UniProtKB"/>
</dbReference>
<dbReference type="GO" id="GO:0005615">
    <property type="term" value="C:extracellular space"/>
    <property type="evidence" value="ECO:0000314"/>
    <property type="project" value="RGD"/>
</dbReference>
<dbReference type="GO" id="GO:0098978">
    <property type="term" value="C:glutamatergic synapse"/>
    <property type="evidence" value="ECO:0000266"/>
    <property type="project" value="RGD"/>
</dbReference>
<dbReference type="GO" id="GO:0042567">
    <property type="term" value="C:insulin-like growth factor ternary complex"/>
    <property type="evidence" value="ECO:0000266"/>
    <property type="project" value="RGD"/>
</dbReference>
<dbReference type="GO" id="GO:0005614">
    <property type="term" value="C:interstitial matrix"/>
    <property type="evidence" value="ECO:0000314"/>
    <property type="project" value="RGD"/>
</dbReference>
<dbReference type="GO" id="GO:0043025">
    <property type="term" value="C:neuronal cell body"/>
    <property type="evidence" value="ECO:0000314"/>
    <property type="project" value="RGD"/>
</dbReference>
<dbReference type="GO" id="GO:0099013">
    <property type="term" value="C:neuronal dense core vesicle lumen"/>
    <property type="evidence" value="ECO:0000266"/>
    <property type="project" value="RGD"/>
</dbReference>
<dbReference type="GO" id="GO:0005886">
    <property type="term" value="C:plasma membrane"/>
    <property type="evidence" value="ECO:0000266"/>
    <property type="project" value="RGD"/>
</dbReference>
<dbReference type="GO" id="GO:0031091">
    <property type="term" value="C:platelet alpha granule"/>
    <property type="evidence" value="ECO:0000314"/>
    <property type="project" value="RGD"/>
</dbReference>
<dbReference type="GO" id="GO:0098794">
    <property type="term" value="C:postsynapse"/>
    <property type="evidence" value="ECO:0007669"/>
    <property type="project" value="GOC"/>
</dbReference>
<dbReference type="GO" id="GO:0008083">
    <property type="term" value="F:growth factor activity"/>
    <property type="evidence" value="ECO:0000266"/>
    <property type="project" value="RGD"/>
</dbReference>
<dbReference type="GO" id="GO:0005179">
    <property type="term" value="F:hormone activity"/>
    <property type="evidence" value="ECO:0000314"/>
    <property type="project" value="RGD"/>
</dbReference>
<dbReference type="GO" id="GO:0005158">
    <property type="term" value="F:insulin receptor binding"/>
    <property type="evidence" value="ECO:0000266"/>
    <property type="project" value="RGD"/>
</dbReference>
<dbReference type="GO" id="GO:0005159">
    <property type="term" value="F:insulin-like growth factor receptor binding"/>
    <property type="evidence" value="ECO:0000314"/>
    <property type="project" value="RGD"/>
</dbReference>
<dbReference type="GO" id="GO:0005178">
    <property type="term" value="F:integrin binding"/>
    <property type="evidence" value="ECO:0000266"/>
    <property type="project" value="RGD"/>
</dbReference>
<dbReference type="GO" id="GO:0043539">
    <property type="term" value="F:protein serine/threonine kinase activator activity"/>
    <property type="evidence" value="ECO:0000314"/>
    <property type="project" value="BHF-UCL"/>
</dbReference>
<dbReference type="GO" id="GO:0048018">
    <property type="term" value="F:receptor ligand activity"/>
    <property type="evidence" value="ECO:0000266"/>
    <property type="project" value="RGD"/>
</dbReference>
<dbReference type="GO" id="GO:0005496">
    <property type="term" value="F:steroid binding"/>
    <property type="evidence" value="ECO:0000314"/>
    <property type="project" value="RGD"/>
</dbReference>
<dbReference type="GO" id="GO:0030297">
    <property type="term" value="F:transmembrane receptor protein tyrosine kinase activator activity"/>
    <property type="evidence" value="ECO:0000266"/>
    <property type="project" value="RGD"/>
</dbReference>
<dbReference type="GO" id="GO:0030521">
    <property type="term" value="P:androgen receptor signaling pathway"/>
    <property type="evidence" value="ECO:0000266"/>
    <property type="project" value="RGD"/>
</dbReference>
<dbReference type="GO" id="GO:0001974">
    <property type="term" value="P:blood vessel remodeling"/>
    <property type="evidence" value="ECO:0000266"/>
    <property type="project" value="RGD"/>
</dbReference>
<dbReference type="GO" id="GO:0060348">
    <property type="term" value="P:bone development"/>
    <property type="evidence" value="ECO:0000270"/>
    <property type="project" value="RGD"/>
</dbReference>
<dbReference type="GO" id="GO:0035630">
    <property type="term" value="P:bone mineralization involved in bone maturation"/>
    <property type="evidence" value="ECO:0000266"/>
    <property type="project" value="RGD"/>
</dbReference>
<dbReference type="GO" id="GO:0048754">
    <property type="term" value="P:branching morphogenesis of an epithelial tube"/>
    <property type="evidence" value="ECO:0000266"/>
    <property type="project" value="RGD"/>
</dbReference>
<dbReference type="GO" id="GO:0003230">
    <property type="term" value="P:cardiac atrium development"/>
    <property type="evidence" value="ECO:0000270"/>
    <property type="project" value="RGD"/>
</dbReference>
<dbReference type="GO" id="GO:0001775">
    <property type="term" value="P:cell activation"/>
    <property type="evidence" value="ECO:0000266"/>
    <property type="project" value="RGD"/>
</dbReference>
<dbReference type="GO" id="GO:0048468">
    <property type="term" value="P:cell development"/>
    <property type="evidence" value="ECO:0000266"/>
    <property type="project" value="RGD"/>
</dbReference>
<dbReference type="GO" id="GO:0008283">
    <property type="term" value="P:cell population proliferation"/>
    <property type="evidence" value="ECO:0000266"/>
    <property type="project" value="RGD"/>
</dbReference>
<dbReference type="GO" id="GO:0097696">
    <property type="term" value="P:cell surface receptor signaling pathway via STAT"/>
    <property type="evidence" value="ECO:0000266"/>
    <property type="project" value="RGD"/>
</dbReference>
<dbReference type="GO" id="GO:1904646">
    <property type="term" value="P:cellular response to amyloid-beta"/>
    <property type="evidence" value="ECO:0000266"/>
    <property type="project" value="RGD"/>
</dbReference>
<dbReference type="GO" id="GO:0071549">
    <property type="term" value="P:cellular response to dexamethasone stimulus"/>
    <property type="evidence" value="ECO:0000270"/>
    <property type="project" value="RGD"/>
</dbReference>
<dbReference type="GO" id="GO:0071257">
    <property type="term" value="P:cellular response to electrical stimulus"/>
    <property type="evidence" value="ECO:0000270"/>
    <property type="project" value="RGD"/>
</dbReference>
<dbReference type="GO" id="GO:0071392">
    <property type="term" value="P:cellular response to estradiol stimulus"/>
    <property type="evidence" value="ECO:0000270"/>
    <property type="project" value="RGD"/>
</dbReference>
<dbReference type="GO" id="GO:0071333">
    <property type="term" value="P:cellular response to glucose stimulus"/>
    <property type="evidence" value="ECO:0000266"/>
    <property type="project" value="RGD"/>
</dbReference>
<dbReference type="GO" id="GO:0032869">
    <property type="term" value="P:cellular response to insulin stimulus"/>
    <property type="evidence" value="ECO:0000270"/>
    <property type="project" value="RGD"/>
</dbReference>
<dbReference type="GO" id="GO:1990314">
    <property type="term" value="P:cellular response to insulin-like growth factor stimulus"/>
    <property type="evidence" value="ECO:0000266"/>
    <property type="project" value="RGD"/>
</dbReference>
<dbReference type="GO" id="GO:0071316">
    <property type="term" value="P:cellular response to nicotine"/>
    <property type="evidence" value="ECO:0000270"/>
    <property type="project" value="RGD"/>
</dbReference>
<dbReference type="GO" id="GO:0071393">
    <property type="term" value="P:cellular response to progesterone stimulus"/>
    <property type="evidence" value="ECO:0000270"/>
    <property type="project" value="RGD"/>
</dbReference>
<dbReference type="GO" id="GO:1904017">
    <property type="term" value="P:cellular response to Thyroglobulin triiodothyronine"/>
    <property type="evidence" value="ECO:0000270"/>
    <property type="project" value="RGD"/>
</dbReference>
<dbReference type="GO" id="GO:0034224">
    <property type="term" value="P:cellular response to zinc ion starvation"/>
    <property type="evidence" value="ECO:0000270"/>
    <property type="project" value="RGD"/>
</dbReference>
<dbReference type="GO" id="GO:0021930">
    <property type="term" value="P:cerebellar granule cell precursor proliferation"/>
    <property type="evidence" value="ECO:0000266"/>
    <property type="project" value="RGD"/>
</dbReference>
<dbReference type="GO" id="GO:0050650">
    <property type="term" value="P:chondroitin sulfate proteoglycan biosynthetic process"/>
    <property type="evidence" value="ECO:0000266"/>
    <property type="project" value="RGD"/>
</dbReference>
<dbReference type="GO" id="GO:0007623">
    <property type="term" value="P:circadian rhythm"/>
    <property type="evidence" value="ECO:0000266"/>
    <property type="project" value="RGD"/>
</dbReference>
<dbReference type="GO" id="GO:0060363">
    <property type="term" value="P:cranial suture morphogenesis"/>
    <property type="evidence" value="ECO:0000270"/>
    <property type="project" value="RGD"/>
</dbReference>
<dbReference type="GO" id="GO:0050974">
    <property type="term" value="P:detection of mechanical stimulus involved in sensory perception"/>
    <property type="evidence" value="ECO:0000315"/>
    <property type="project" value="RGD"/>
</dbReference>
<dbReference type="GO" id="GO:0031017">
    <property type="term" value="P:exocrine pancreas development"/>
    <property type="evidence" value="ECO:0000266"/>
    <property type="project" value="RGD"/>
</dbReference>
<dbReference type="GO" id="GO:0097192">
    <property type="term" value="P:extrinsic apoptotic signaling pathway in absence of ligand"/>
    <property type="evidence" value="ECO:0000266"/>
    <property type="project" value="RGD"/>
</dbReference>
<dbReference type="GO" id="GO:0007565">
    <property type="term" value="P:female pregnancy"/>
    <property type="evidence" value="ECO:0000270"/>
    <property type="project" value="RGD"/>
</dbReference>
<dbReference type="GO" id="GO:0010001">
    <property type="term" value="P:glial cell differentiation"/>
    <property type="evidence" value="ECO:0000266"/>
    <property type="project" value="RGD"/>
</dbReference>
<dbReference type="GO" id="GO:0060396">
    <property type="term" value="P:growth hormone receptor signaling pathway"/>
    <property type="evidence" value="ECO:0000266"/>
    <property type="project" value="RGD"/>
</dbReference>
<dbReference type="GO" id="GO:0048839">
    <property type="term" value="P:inner ear development"/>
    <property type="evidence" value="ECO:0000266"/>
    <property type="project" value="RGD"/>
</dbReference>
<dbReference type="GO" id="GO:0008286">
    <property type="term" value="P:insulin receptor signaling pathway"/>
    <property type="evidence" value="ECO:0000266"/>
    <property type="project" value="RGD"/>
</dbReference>
<dbReference type="GO" id="GO:0048009">
    <property type="term" value="P:insulin-like growth factor receptor signaling pathway"/>
    <property type="evidence" value="ECO:0000314"/>
    <property type="project" value="BHF-UCL"/>
</dbReference>
<dbReference type="GO" id="GO:0048286">
    <property type="term" value="P:lung alveolus development"/>
    <property type="evidence" value="ECO:0000266"/>
    <property type="project" value="RGD"/>
</dbReference>
<dbReference type="GO" id="GO:0030324">
    <property type="term" value="P:lung development"/>
    <property type="evidence" value="ECO:0000266"/>
    <property type="project" value="RGD"/>
</dbReference>
<dbReference type="GO" id="GO:0060463">
    <property type="term" value="P:lung lobe morphogenesis"/>
    <property type="evidence" value="ECO:0000266"/>
    <property type="project" value="RGD"/>
</dbReference>
<dbReference type="GO" id="GO:0060426">
    <property type="term" value="P:lung vasculature development"/>
    <property type="evidence" value="ECO:0000266"/>
    <property type="project" value="RGD"/>
</dbReference>
<dbReference type="GO" id="GO:0030879">
    <property type="term" value="P:mammary gland development"/>
    <property type="evidence" value="ECO:0000266"/>
    <property type="project" value="RGD"/>
</dbReference>
<dbReference type="GO" id="GO:0007613">
    <property type="term" value="P:memory"/>
    <property type="evidence" value="ECO:0000315"/>
    <property type="project" value="RGD"/>
</dbReference>
<dbReference type="GO" id="GO:0035264">
    <property type="term" value="P:multicellular organism growth"/>
    <property type="evidence" value="ECO:0000266"/>
    <property type="project" value="RGD"/>
</dbReference>
<dbReference type="GO" id="GO:0014896">
    <property type="term" value="P:muscle hypertrophy"/>
    <property type="evidence" value="ECO:0000266"/>
    <property type="project" value="RGD"/>
</dbReference>
<dbReference type="GO" id="GO:0045445">
    <property type="term" value="P:myoblast differentiation"/>
    <property type="evidence" value="ECO:0000266"/>
    <property type="project" value="RGD"/>
</dbReference>
<dbReference type="GO" id="GO:0051450">
    <property type="term" value="P:myoblast proliferation"/>
    <property type="evidence" value="ECO:0000266"/>
    <property type="project" value="RGD"/>
</dbReference>
<dbReference type="GO" id="GO:0014904">
    <property type="term" value="P:myotube cell development"/>
    <property type="evidence" value="ECO:0000266"/>
    <property type="project" value="RGD"/>
</dbReference>
<dbReference type="GO" id="GO:0014902">
    <property type="term" value="P:myotube differentiation"/>
    <property type="evidence" value="ECO:0000266"/>
    <property type="project" value="RGD"/>
</dbReference>
<dbReference type="GO" id="GO:1902430">
    <property type="term" value="P:negative regulation of amyloid-beta formation"/>
    <property type="evidence" value="ECO:0000266"/>
    <property type="project" value="RGD"/>
</dbReference>
<dbReference type="GO" id="GO:0060766">
    <property type="term" value="P:negative regulation of androgen receptor signaling pathway"/>
    <property type="evidence" value="ECO:0000266"/>
    <property type="project" value="RGD"/>
</dbReference>
<dbReference type="GO" id="GO:0043066">
    <property type="term" value="P:negative regulation of apoptotic process"/>
    <property type="evidence" value="ECO:0000314"/>
    <property type="project" value="RGD"/>
</dbReference>
<dbReference type="GO" id="GO:0008285">
    <property type="term" value="P:negative regulation of cell population proliferation"/>
    <property type="evidence" value="ECO:0000266"/>
    <property type="project" value="RGD"/>
</dbReference>
<dbReference type="GO" id="GO:1904193">
    <property type="term" value="P:negative regulation of cholangiocyte apoptotic process"/>
    <property type="evidence" value="ECO:0000315"/>
    <property type="project" value="RGD"/>
</dbReference>
<dbReference type="GO" id="GO:0070373">
    <property type="term" value="P:negative regulation of ERK1 and ERK2 cascade"/>
    <property type="evidence" value="ECO:0000266"/>
    <property type="project" value="RGD"/>
</dbReference>
<dbReference type="GO" id="GO:2001237">
    <property type="term" value="P:negative regulation of extrinsic apoptotic signaling pathway"/>
    <property type="evidence" value="ECO:0000314"/>
    <property type="project" value="BHF-UCL"/>
</dbReference>
<dbReference type="GO" id="GO:0010629">
    <property type="term" value="P:negative regulation of gene expression"/>
    <property type="evidence" value="ECO:0000266"/>
    <property type="project" value="RGD"/>
</dbReference>
<dbReference type="GO" id="GO:0002683">
    <property type="term" value="P:negative regulation of immune system process"/>
    <property type="evidence" value="ECO:0000315"/>
    <property type="project" value="RGD"/>
</dbReference>
<dbReference type="GO" id="GO:0032691">
    <property type="term" value="P:negative regulation of interleukin-1 beta production"/>
    <property type="evidence" value="ECO:0000266"/>
    <property type="project" value="RGD"/>
</dbReference>
<dbReference type="GO" id="GO:0010656">
    <property type="term" value="P:negative regulation of muscle cell apoptotic process"/>
    <property type="evidence" value="ECO:0000315"/>
    <property type="project" value="RGD"/>
</dbReference>
<dbReference type="GO" id="GO:0150079">
    <property type="term" value="P:negative regulation of neuroinflammatory response"/>
    <property type="evidence" value="ECO:0000266"/>
    <property type="project" value="RGD"/>
</dbReference>
<dbReference type="GO" id="GO:1900142">
    <property type="term" value="P:negative regulation of oligodendrocyte apoptotic process"/>
    <property type="evidence" value="ECO:0000314"/>
    <property type="project" value="RGD"/>
</dbReference>
<dbReference type="GO" id="GO:0060283">
    <property type="term" value="P:negative regulation of oocyte development"/>
    <property type="evidence" value="ECO:0000266"/>
    <property type="project" value="RGD"/>
</dbReference>
<dbReference type="GO" id="GO:0090201">
    <property type="term" value="P:negative regulation of release of cytochrome c from mitochondria"/>
    <property type="evidence" value="ECO:0000250"/>
    <property type="project" value="UniProtKB"/>
</dbReference>
<dbReference type="GO" id="GO:0034392">
    <property type="term" value="P:negative regulation of smooth muscle cell apoptotic process"/>
    <property type="evidence" value="ECO:0000315"/>
    <property type="project" value="UniProtKB"/>
</dbReference>
<dbReference type="GO" id="GO:0032720">
    <property type="term" value="P:negative regulation of tumor necrosis factor production"/>
    <property type="evidence" value="ECO:0000266"/>
    <property type="project" value="RGD"/>
</dbReference>
<dbReference type="GO" id="GO:1905460">
    <property type="term" value="P:negative regulation of vascular associated smooth muscle cell apoptotic process"/>
    <property type="evidence" value="ECO:0000266"/>
    <property type="project" value="RGD"/>
</dbReference>
<dbReference type="GO" id="GO:0007399">
    <property type="term" value="P:nervous system development"/>
    <property type="evidence" value="ECO:0000266"/>
    <property type="project" value="RGD"/>
</dbReference>
<dbReference type="GO" id="GO:0001649">
    <property type="term" value="P:osteoblast differentiation"/>
    <property type="evidence" value="ECO:0000266"/>
    <property type="project" value="RGD"/>
</dbReference>
<dbReference type="GO" id="GO:0043491">
    <property type="term" value="P:phosphatidylinositol 3-kinase/protein kinase B signal transduction"/>
    <property type="evidence" value="ECO:0000266"/>
    <property type="project" value="RGD"/>
</dbReference>
<dbReference type="GO" id="GO:0042104">
    <property type="term" value="P:positive regulation of activated T cell proliferation"/>
    <property type="evidence" value="ECO:0000266"/>
    <property type="project" value="RGD"/>
</dbReference>
<dbReference type="GO" id="GO:0043536">
    <property type="term" value="P:positive regulation of blood vessel endothelial cell migration"/>
    <property type="evidence" value="ECO:0000316"/>
    <property type="project" value="BHF-UCL"/>
</dbReference>
<dbReference type="GO" id="GO:0070886">
    <property type="term" value="P:positive regulation of calcineurin-NFAT signaling cascade"/>
    <property type="evidence" value="ECO:0000266"/>
    <property type="project" value="RGD"/>
</dbReference>
<dbReference type="GO" id="GO:0010613">
    <property type="term" value="P:positive regulation of cardiac muscle hypertrophy"/>
    <property type="evidence" value="ECO:0000266"/>
    <property type="project" value="RGD"/>
</dbReference>
<dbReference type="GO" id="GO:0030307">
    <property type="term" value="P:positive regulation of cell growth"/>
    <property type="evidence" value="ECO:0000314"/>
    <property type="project" value="RGD"/>
</dbReference>
<dbReference type="GO" id="GO:0061051">
    <property type="term" value="P:positive regulation of cell growth involved in cardiac muscle cell development"/>
    <property type="evidence" value="ECO:0000266"/>
    <property type="project" value="RGD"/>
</dbReference>
<dbReference type="GO" id="GO:0030335">
    <property type="term" value="P:positive regulation of cell migration"/>
    <property type="evidence" value="ECO:0000266"/>
    <property type="project" value="RGD"/>
</dbReference>
<dbReference type="GO" id="GO:0008284">
    <property type="term" value="P:positive regulation of cell population proliferation"/>
    <property type="evidence" value="ECO:0000250"/>
    <property type="project" value="UniProtKB"/>
</dbReference>
<dbReference type="GO" id="GO:0021940">
    <property type="term" value="P:positive regulation of cerebellar granule cell precursor proliferation"/>
    <property type="evidence" value="ECO:0000266"/>
    <property type="project" value="RGD"/>
</dbReference>
<dbReference type="GO" id="GO:0046326">
    <property type="term" value="P:positive regulation of D-glucose import"/>
    <property type="evidence" value="ECO:0000250"/>
    <property type="project" value="UniProtKB"/>
</dbReference>
<dbReference type="GO" id="GO:0045893">
    <property type="term" value="P:positive regulation of DNA-templated transcription"/>
    <property type="evidence" value="ECO:0000266"/>
    <property type="project" value="RGD"/>
</dbReference>
<dbReference type="GO" id="GO:0050679">
    <property type="term" value="P:positive regulation of epithelial cell proliferation"/>
    <property type="evidence" value="ECO:0000266"/>
    <property type="project" value="RGD"/>
</dbReference>
<dbReference type="GO" id="GO:0070374">
    <property type="term" value="P:positive regulation of ERK1 and ERK2 cascade"/>
    <property type="evidence" value="ECO:0000266"/>
    <property type="project" value="RGD"/>
</dbReference>
<dbReference type="GO" id="GO:0045600">
    <property type="term" value="P:positive regulation of fat cell differentiation"/>
    <property type="evidence" value="ECO:0000314"/>
    <property type="project" value="RGD"/>
</dbReference>
<dbReference type="GO" id="GO:0048146">
    <property type="term" value="P:positive regulation of fibroblast proliferation"/>
    <property type="evidence" value="ECO:0000266"/>
    <property type="project" value="RGD"/>
</dbReference>
<dbReference type="GO" id="GO:0010628">
    <property type="term" value="P:positive regulation of gene expression"/>
    <property type="evidence" value="ECO:0000266"/>
    <property type="project" value="RGD"/>
</dbReference>
<dbReference type="GO" id="GO:0060252">
    <property type="term" value="P:positive regulation of glial cell proliferation"/>
    <property type="evidence" value="ECO:0000314"/>
    <property type="project" value="RGD"/>
</dbReference>
<dbReference type="GO" id="GO:0045725">
    <property type="term" value="P:positive regulation of glycogen biosynthetic process"/>
    <property type="evidence" value="ECO:0000250"/>
    <property type="project" value="UniProtKB"/>
</dbReference>
<dbReference type="GO" id="GO:0045821">
    <property type="term" value="P:positive regulation of glycolytic process"/>
    <property type="evidence" value="ECO:0000266"/>
    <property type="project" value="RGD"/>
</dbReference>
<dbReference type="GO" id="GO:0010560">
    <property type="term" value="P:positive regulation of glycoprotein biosynthetic process"/>
    <property type="evidence" value="ECO:0000266"/>
    <property type="project" value="RGD"/>
</dbReference>
<dbReference type="GO" id="GO:0043568">
    <property type="term" value="P:positive regulation of insulin-like growth factor receptor signaling pathway"/>
    <property type="evidence" value="ECO:0000266"/>
    <property type="project" value="RGD"/>
</dbReference>
<dbReference type="GO" id="GO:0043410">
    <property type="term" value="P:positive regulation of MAPK cascade"/>
    <property type="evidence" value="ECO:0000315"/>
    <property type="project" value="UniProtKB"/>
</dbReference>
<dbReference type="GO" id="GO:0045840">
    <property type="term" value="P:positive regulation of mitotic nuclear division"/>
    <property type="evidence" value="ECO:0000266"/>
    <property type="project" value="RGD"/>
</dbReference>
<dbReference type="GO" id="GO:0031643">
    <property type="term" value="P:positive regulation of myelination"/>
    <property type="evidence" value="ECO:0000266"/>
    <property type="project" value="RGD"/>
</dbReference>
<dbReference type="GO" id="GO:2000288">
    <property type="term" value="P:positive regulation of myoblast proliferation"/>
    <property type="evidence" value="ECO:0000266"/>
    <property type="project" value="RGD"/>
</dbReference>
<dbReference type="GO" id="GO:0045669">
    <property type="term" value="P:positive regulation of osteoblast differentiation"/>
    <property type="evidence" value="ECO:0000314"/>
    <property type="project" value="RGD"/>
</dbReference>
<dbReference type="GO" id="GO:0051897">
    <property type="term" value="P:positive regulation of phosphatidylinositol 3-kinase/protein kinase B signal transduction"/>
    <property type="evidence" value="ECO:0000314"/>
    <property type="project" value="BHF-UCL"/>
</dbReference>
<dbReference type="GO" id="GO:0050714">
    <property type="term" value="P:positive regulation of protein secretion"/>
    <property type="evidence" value="ECO:0000266"/>
    <property type="project" value="RGD"/>
</dbReference>
<dbReference type="GO" id="GO:0046579">
    <property type="term" value="P:positive regulation of Ras protein signal transduction"/>
    <property type="evidence" value="ECO:0000266"/>
    <property type="project" value="RGD"/>
</dbReference>
<dbReference type="GO" id="GO:0014911">
    <property type="term" value="P:positive regulation of smooth muscle cell migration"/>
    <property type="evidence" value="ECO:0000266"/>
    <property type="project" value="RGD"/>
</dbReference>
<dbReference type="GO" id="GO:0048661">
    <property type="term" value="P:positive regulation of smooth muscle cell proliferation"/>
    <property type="evidence" value="ECO:0000266"/>
    <property type="project" value="RGD"/>
</dbReference>
<dbReference type="GO" id="GO:0090031">
    <property type="term" value="P:positive regulation of steroid hormone biosynthetic process"/>
    <property type="evidence" value="ECO:0000314"/>
    <property type="project" value="BHF-UCL"/>
</dbReference>
<dbReference type="GO" id="GO:0045944">
    <property type="term" value="P:positive regulation of transcription by RNA polymerase II"/>
    <property type="evidence" value="ECO:0000266"/>
    <property type="project" value="RGD"/>
</dbReference>
<dbReference type="GO" id="GO:1904075">
    <property type="term" value="P:positive regulation of trophectodermal cell proliferation"/>
    <property type="evidence" value="ECO:0000266"/>
    <property type="project" value="RGD"/>
</dbReference>
<dbReference type="GO" id="GO:1904692">
    <property type="term" value="P:positive regulation of type B pancreatic cell proliferation"/>
    <property type="evidence" value="ECO:0000266"/>
    <property type="project" value="RGD"/>
</dbReference>
<dbReference type="GO" id="GO:1904707">
    <property type="term" value="P:positive regulation of vascular associated smooth muscle cell proliferation"/>
    <property type="evidence" value="ECO:0000266"/>
    <property type="project" value="RGD"/>
</dbReference>
<dbReference type="GO" id="GO:1905564">
    <property type="term" value="P:positive regulation of vascular endothelial cell proliferation"/>
    <property type="evidence" value="ECO:0000316"/>
    <property type="project" value="BHF-UCL"/>
</dbReference>
<dbReference type="GO" id="GO:0099170">
    <property type="term" value="P:postsynaptic modulation of chemical synaptic transmission"/>
    <property type="evidence" value="ECO:0000266"/>
    <property type="project" value="RGD"/>
</dbReference>
<dbReference type="GO" id="GO:0060527">
    <property type="term" value="P:prostate epithelial cord arborization involved in prostate glandular acinus morphogenesis"/>
    <property type="evidence" value="ECO:0000266"/>
    <property type="project" value="RGD"/>
</dbReference>
<dbReference type="GO" id="GO:0060740">
    <property type="term" value="P:prostate gland epithelium morphogenesis"/>
    <property type="evidence" value="ECO:0000266"/>
    <property type="project" value="RGD"/>
</dbReference>
<dbReference type="GO" id="GO:0060736">
    <property type="term" value="P:prostate gland growth"/>
    <property type="evidence" value="ECO:0000266"/>
    <property type="project" value="RGD"/>
</dbReference>
<dbReference type="GO" id="GO:0060741">
    <property type="term" value="P:prostate gland stromal morphogenesis"/>
    <property type="evidence" value="ECO:0000266"/>
    <property type="project" value="RGD"/>
</dbReference>
<dbReference type="GO" id="GO:0050821">
    <property type="term" value="P:protein stabilization"/>
    <property type="evidence" value="ECO:0000266"/>
    <property type="project" value="RGD"/>
</dbReference>
<dbReference type="GO" id="GO:0030166">
    <property type="term" value="P:proteoglycan biosynthetic process"/>
    <property type="evidence" value="ECO:0000266"/>
    <property type="project" value="RGD"/>
</dbReference>
<dbReference type="GO" id="GO:0051924">
    <property type="term" value="P:regulation of calcium ion transport"/>
    <property type="evidence" value="ECO:0000314"/>
    <property type="project" value="RGD"/>
</dbReference>
<dbReference type="GO" id="GO:0042127">
    <property type="term" value="P:regulation of cell population proliferation"/>
    <property type="evidence" value="ECO:0000314"/>
    <property type="project" value="RGD"/>
</dbReference>
<dbReference type="GO" id="GO:0032878">
    <property type="term" value="P:regulation of establishment or maintenance of cell polarity"/>
    <property type="evidence" value="ECO:0000266"/>
    <property type="project" value="RGD"/>
</dbReference>
<dbReference type="GO" id="GO:0010468">
    <property type="term" value="P:regulation of gene expression"/>
    <property type="evidence" value="ECO:0000266"/>
    <property type="project" value="RGD"/>
</dbReference>
<dbReference type="GO" id="GO:0045428">
    <property type="term" value="P:regulation of nitric oxide biosynthetic process"/>
    <property type="evidence" value="ECO:0000266"/>
    <property type="project" value="RGD"/>
</dbReference>
<dbReference type="GO" id="GO:0051246">
    <property type="term" value="P:regulation of protein metabolic process"/>
    <property type="evidence" value="ECO:0000266"/>
    <property type="project" value="RGD"/>
</dbReference>
<dbReference type="GO" id="GO:0006417">
    <property type="term" value="P:regulation of translation"/>
    <property type="evidence" value="ECO:0000315"/>
    <property type="project" value="RGD"/>
</dbReference>
<dbReference type="GO" id="GO:0014823">
    <property type="term" value="P:response to activity"/>
    <property type="evidence" value="ECO:0000270"/>
    <property type="project" value="RGD"/>
</dbReference>
<dbReference type="GO" id="GO:0031000">
    <property type="term" value="P:response to caffeine"/>
    <property type="evidence" value="ECO:0000270"/>
    <property type="project" value="RGD"/>
</dbReference>
<dbReference type="GO" id="GO:0070849">
    <property type="term" value="P:response to epidermal growth factor"/>
    <property type="evidence" value="ECO:0000270"/>
    <property type="project" value="RGD"/>
</dbReference>
<dbReference type="GO" id="GO:0032355">
    <property type="term" value="P:response to estradiol"/>
    <property type="evidence" value="ECO:0000270"/>
    <property type="project" value="RGD"/>
</dbReference>
<dbReference type="GO" id="GO:0045471">
    <property type="term" value="P:response to ethanol"/>
    <property type="evidence" value="ECO:0000314"/>
    <property type="project" value="RGD"/>
</dbReference>
<dbReference type="GO" id="GO:0051384">
    <property type="term" value="P:response to glucocorticoid"/>
    <property type="evidence" value="ECO:0000270"/>
    <property type="project" value="RGD"/>
</dbReference>
<dbReference type="GO" id="GO:0060416">
    <property type="term" value="P:response to growth hormone"/>
    <property type="evidence" value="ECO:0000270"/>
    <property type="project" value="RGD"/>
</dbReference>
<dbReference type="GO" id="GO:0009408">
    <property type="term" value="P:response to heat"/>
    <property type="evidence" value="ECO:0000266"/>
    <property type="project" value="RGD"/>
</dbReference>
<dbReference type="GO" id="GO:0001666">
    <property type="term" value="P:response to hypoxia"/>
    <property type="evidence" value="ECO:0000270"/>
    <property type="project" value="RGD"/>
</dbReference>
<dbReference type="GO" id="GO:0032496">
    <property type="term" value="P:response to lipopolysaccharide"/>
    <property type="evidence" value="ECO:0000270"/>
    <property type="project" value="RGD"/>
</dbReference>
<dbReference type="GO" id="GO:0009612">
    <property type="term" value="P:response to mechanical stimulus"/>
    <property type="evidence" value="ECO:0000270"/>
    <property type="project" value="RGD"/>
</dbReference>
<dbReference type="GO" id="GO:0035094">
    <property type="term" value="P:response to nicotine"/>
    <property type="evidence" value="ECO:0000270"/>
    <property type="project" value="RGD"/>
</dbReference>
<dbReference type="GO" id="GO:0007584">
    <property type="term" value="P:response to nutrient"/>
    <property type="evidence" value="ECO:0000270"/>
    <property type="project" value="RGD"/>
</dbReference>
<dbReference type="GO" id="GO:0031667">
    <property type="term" value="P:response to nutrient levels"/>
    <property type="evidence" value="ECO:0000270"/>
    <property type="project" value="RGD"/>
</dbReference>
<dbReference type="GO" id="GO:0042594">
    <property type="term" value="P:response to starvation"/>
    <property type="evidence" value="ECO:0000270"/>
    <property type="project" value="RGD"/>
</dbReference>
<dbReference type="GO" id="GO:0048545">
    <property type="term" value="P:response to steroid hormone"/>
    <property type="evidence" value="ECO:0000270"/>
    <property type="project" value="RGD"/>
</dbReference>
<dbReference type="GO" id="GO:0097066">
    <property type="term" value="P:response to thyroid hormone"/>
    <property type="evidence" value="ECO:0000270"/>
    <property type="project" value="RGD"/>
</dbReference>
<dbReference type="GO" id="GO:1990009">
    <property type="term" value="P:retinal cell apoptotic process"/>
    <property type="evidence" value="ECO:0000314"/>
    <property type="project" value="RGD"/>
</dbReference>
<dbReference type="GO" id="GO:0014834">
    <property type="term" value="P:skeletal muscle satellite cell maintenance involved in skeletal muscle regeneration"/>
    <property type="evidence" value="ECO:0000266"/>
    <property type="project" value="RGD"/>
</dbReference>
<dbReference type="GO" id="GO:0044342">
    <property type="term" value="P:type B pancreatic cell proliferation"/>
    <property type="evidence" value="ECO:0000266"/>
    <property type="project" value="RGD"/>
</dbReference>
<dbReference type="GO" id="GO:0060509">
    <property type="term" value="P:type I pneumocyte differentiation"/>
    <property type="evidence" value="ECO:0000266"/>
    <property type="project" value="RGD"/>
</dbReference>
<dbReference type="GO" id="GO:0060510">
    <property type="term" value="P:type II pneumocyte differentiation"/>
    <property type="evidence" value="ECO:0000266"/>
    <property type="project" value="RGD"/>
</dbReference>
<dbReference type="GO" id="GO:0042060">
    <property type="term" value="P:wound healing"/>
    <property type="evidence" value="ECO:0000266"/>
    <property type="project" value="RGD"/>
</dbReference>
<dbReference type="CDD" id="cd04368">
    <property type="entry name" value="IlGF"/>
    <property type="match status" value="1"/>
</dbReference>
<dbReference type="FunFam" id="1.10.100.10:FF:000001">
    <property type="entry name" value="insulin-like growth factor I isoform X1"/>
    <property type="match status" value="1"/>
</dbReference>
<dbReference type="Gene3D" id="1.10.100.10">
    <property type="entry name" value="Insulin-like"/>
    <property type="match status" value="1"/>
</dbReference>
<dbReference type="InterPro" id="IPR022341">
    <property type="entry name" value="IGF-I"/>
</dbReference>
<dbReference type="InterPro" id="IPR016179">
    <property type="entry name" value="Insulin-like"/>
</dbReference>
<dbReference type="InterPro" id="IPR022350">
    <property type="entry name" value="Insulin-like_growth_factor"/>
</dbReference>
<dbReference type="InterPro" id="IPR036438">
    <property type="entry name" value="Insulin-like_sf"/>
</dbReference>
<dbReference type="InterPro" id="IPR022353">
    <property type="entry name" value="Insulin_CS"/>
</dbReference>
<dbReference type="InterPro" id="IPR022352">
    <property type="entry name" value="Insulin_family"/>
</dbReference>
<dbReference type="PANTHER" id="PTHR46845">
    <property type="entry name" value="INSULIN-LIKE GROWTH FACTOR I"/>
    <property type="match status" value="1"/>
</dbReference>
<dbReference type="PANTHER" id="PTHR46845:SF1">
    <property type="entry name" value="INSULIN-LIKE GROWTH FACTOR I"/>
    <property type="match status" value="1"/>
</dbReference>
<dbReference type="Pfam" id="PF00049">
    <property type="entry name" value="Insulin"/>
    <property type="match status" value="2"/>
</dbReference>
<dbReference type="PRINTS" id="PR02002">
    <property type="entry name" value="INSLNLIKEGF"/>
</dbReference>
<dbReference type="PRINTS" id="PR02005">
    <property type="entry name" value="INSLNLIKEGF1"/>
</dbReference>
<dbReference type="PRINTS" id="PR00276">
    <property type="entry name" value="INSULINFAMLY"/>
</dbReference>
<dbReference type="SMART" id="SM00078">
    <property type="entry name" value="IlGF"/>
    <property type="match status" value="1"/>
</dbReference>
<dbReference type="SUPFAM" id="SSF56994">
    <property type="entry name" value="Insulin-like"/>
    <property type="match status" value="1"/>
</dbReference>
<dbReference type="PROSITE" id="PS00262">
    <property type="entry name" value="INSULIN"/>
    <property type="match status" value="1"/>
</dbReference>
<accession>P08025</accession>
<accession>P08024</accession>
<proteinExistence type="evidence at protein level"/>
<reference key="1">
    <citation type="journal article" date="1987" name="J. Biol. Chem.">
        <title>Mosaic evolution of the insulin-like growth factors. Organization, sequence, and expression of the rat insulin-like growth factor I gene.</title>
        <authorList>
            <person name="Shimatsu A."/>
            <person name="Rotwein P."/>
        </authorList>
    </citation>
    <scope>NUCLEOTIDE SEQUENCE [GENOMIC DNA] (ISOFORMS IGF-IA AND IGF-IB)</scope>
    <source>
        <tissue>Liver</tissue>
    </source>
</reference>
<reference key="2">
    <citation type="journal article" date="1987" name="DNA">
        <title>Isolation of rat testis cDNAs encoding an insulin-like growth factor I precursor.</title>
        <authorList>
            <person name="Casella S.J."/>
            <person name="Smith E.P."/>
            <person name="van Wyk J.J."/>
            <person name="Joseph D.R."/>
            <person name="Hynes M.A."/>
            <person name="Hoyt E.C."/>
            <person name="Lund P.K."/>
        </authorList>
    </citation>
    <scope>NUCLEOTIDE SEQUENCE [MRNA] (ISOFORM IGF-IA)</scope>
    <source>
        <tissue>Testis</tissue>
    </source>
</reference>
<reference key="3">
    <citation type="journal article" date="1987" name="Mol. Endocrinol.">
        <title>Molecular cloning of rat insulin-like growth factor I complementary deoxyribonucleic acids: differential messenger ribonucleic acid processing and regulation by growth hormone in extrahepatic tissues.</title>
        <authorList>
            <person name="Roberts C.T. Jr."/>
            <person name="Lasky S.R."/>
            <person name="Lowe W.L. Jr."/>
            <person name="Seaman W.T."/>
            <person name="LeRoith D."/>
        </authorList>
    </citation>
    <scope>NUCLEOTIDE SEQUENCE [MRNA] (ISOFORM IGF-IA)</scope>
</reference>
<reference key="4">
    <citation type="journal article" date="1987" name="Nucleic Acids Res.">
        <title>Sequence of two rat insulin-like growth factor I mRNAs differing within the 5' untranslated region.</title>
        <authorList>
            <person name="Shimatsu A."/>
            <person name="Rotwein P."/>
        </authorList>
    </citation>
    <scope>NUCLEOTIDE SEQUENCE (ISOFORM IGF-IB)</scope>
</reference>
<reference key="5">
    <citation type="journal article" date="1990" name="Agric. Biol. Chem.">
        <title>A new cDNA clone relating to larger molecular species of rat insulin-like growth factor-I mRNA.</title>
        <authorList>
            <person name="Kato H."/>
            <person name="Okoshi A."/>
            <person name="Miura Y."/>
            <person name="Noguchi T."/>
        </authorList>
    </citation>
    <scope>NUCLEOTIDE SEQUENCE (ISOFORM IGF-IA)</scope>
</reference>
<reference key="6">
    <citation type="journal article" date="1987" name="Endocrinology">
        <title>Identification, characterization, and regulation of a rat complementary deoxyribonucleic acid which encodes insulin-like growth factor-I.</title>
        <authorList>
            <person name="Murphy L.J."/>
            <person name="Bell G.I."/>
            <person name="Duckworth M.L."/>
            <person name="Friesen H.G."/>
        </authorList>
    </citation>
    <scope>NUCLEOTIDE SEQUENCE OF 46-153 (ISOFORM IGF-IA)</scope>
</reference>
<reference key="7">
    <citation type="journal article" date="1989" name="J. Biol. Chem.">
        <title>Primary structure of rat insulin-like growth factor-I and its biological activities.</title>
        <authorList>
            <person name="Tamura K."/>
            <person name="Kobayashi M."/>
            <person name="Ishii Y."/>
            <person name="Tamura T."/>
            <person name="Hashimoto K."/>
            <person name="Nakamura S."/>
            <person name="Niwa M."/>
            <person name="Zapf J."/>
        </authorList>
    </citation>
    <scope>PROTEIN SEQUENCE OF 49-118</scope>
</reference>
<reference key="8">
    <citation type="journal article" date="2010" name="FASEB J.">
        <title>Novel role of C terminus of Hsc70-interacting protein (CHIP) ubiquitin ligase on inhibiting cardiac apoptosis and dysfunction via regulating ERK5-mediated degradation of inducible cAMP early repressor.</title>
        <authorList>
            <person name="Woo C.H."/>
            <person name="Le N.T."/>
            <person name="Shishido T."/>
            <person name="Chang E."/>
            <person name="Lee H."/>
            <person name="Heo K.S."/>
            <person name="Mickelsen D.M."/>
            <person name="Lu Y."/>
            <person name="McClain C."/>
            <person name="Spangenberg T."/>
            <person name="Yan C."/>
            <person name="Molina C.A."/>
            <person name="Yang J."/>
            <person name="Patterson C."/>
            <person name="Abe J."/>
        </authorList>
    </citation>
    <scope>FUNCTION</scope>
</reference>
<name>IGF1_RAT</name>
<sequence>MGKISSLPTQLFKICLCDFLKIKIHIMSSSHLFYLALCLLTFTSSATAGPETLCGAELVDALQFVCGPRGFYFNKPTGYGSSIRRAPQTGIVDECCFRSCDLRRLEMYCAPLKPTKSARSIRAQRHTDMPKTQKEVHLKNTSRGSAGNKTYRM</sequence>
<feature type="signal peptide" evidence="3">
    <location>
        <begin position="1"/>
        <end status="unknown"/>
    </location>
</feature>
<feature type="propeptide" id="PRO_0000015681" evidence="6">
    <location>
        <begin status="unknown"/>
        <end position="48"/>
    </location>
</feature>
<feature type="chain" id="PRO_0000015682" description="Insulin-like growth factor 1">
    <location>
        <begin position="49"/>
        <end position="118"/>
    </location>
</feature>
<feature type="propeptide" id="PRO_0000015683" description="E peptide">
    <location>
        <begin position="119"/>
        <end position="153"/>
    </location>
</feature>
<feature type="region of interest" description="B">
    <location>
        <begin position="49"/>
        <end position="77"/>
    </location>
</feature>
<feature type="region of interest" description="C">
    <location>
        <begin position="78"/>
        <end position="89"/>
    </location>
</feature>
<feature type="region of interest" description="A">
    <location>
        <begin position="90"/>
        <end position="110"/>
    </location>
</feature>
<feature type="region of interest" description="D">
    <location>
        <begin position="111"/>
        <end position="118"/>
    </location>
</feature>
<feature type="region of interest" description="Disordered" evidence="4">
    <location>
        <begin position="119"/>
        <end position="153"/>
    </location>
</feature>
<feature type="compositionally biased region" description="Basic and acidic residues" evidence="4">
    <location>
        <begin position="125"/>
        <end position="138"/>
    </location>
</feature>
<feature type="compositionally biased region" description="Polar residues" evidence="4">
    <location>
        <begin position="139"/>
        <end position="153"/>
    </location>
</feature>
<feature type="disulfide bond" evidence="2">
    <location>
        <begin position="54"/>
        <end position="96"/>
    </location>
</feature>
<feature type="disulfide bond" evidence="2">
    <location>
        <begin position="66"/>
        <end position="109"/>
    </location>
</feature>
<feature type="disulfide bond" evidence="2">
    <location>
        <begin position="95"/>
        <end position="100"/>
    </location>
</feature>
<feature type="splice variant" id="VSP_012166" description="In isoform IGF-IB." evidence="8">
    <original>EVHLKNTSRGSAGNKTYRM</original>
    <variation>SQPLSTHKKRKLQRRRKGSTLEEH</variation>
    <location>
        <begin position="135"/>
        <end position="153"/>
    </location>
</feature>
<feature type="sequence conflict" description="In Ref. 3; AAA41385/AAA41387." evidence="8" ref="3">
    <original>APL</original>
    <variation>VRC</variation>
    <location>
        <begin position="110"/>
        <end position="112"/>
    </location>
</feature>
<comment type="function">
    <text evidence="1 2 5">The insulin-like growth factors, isolated from plasma, are structurally and functionally related to insulin but have a much higher growth-promoting activity. May be a physiological regulator of [1-14C]-2-deoxy-D-glucose (2DG) transport and glycogen synthesis in osteoblasts. Stimulates glucose transport in bone-derived osteoblastic (PyMS) cells and is effective at much lower concentrations than insulin, not only regarding glycogen and DNA synthesis but also with regard to enhancing glucose uptake. May play a role in synapse maturation. Ca(2+)-dependent exocytosis of IGF1 is required for sensory perception of smell in the olfactory bulb. Acts as a ligand for IGF1R. Binds to the alpha subunit of IGF1R, leading to the activation of the intrinsic tyrosine kinase activity which autophosphorylates tyrosine residues in the beta subunit thus initiating a cascade of down-stream signaling events leading to activation of the PI3K-AKT/PKB and the Ras-MAPK pathways. Binds to integrins ITGAV:ITGB3 and ITGA6:ITGB4. Its binding to integrins and subsequent ternary complex formation with integrins and IGFR1 are essential for IGF1 signaling. Induces the phosphorylation and activation of IGFR1, MAPK3/ERK1, MAPK1/ERK2 and AKT1 (By similarity). As part of the MAPK/ERK signaling pathway, acts as a negative regulator of apoptosis in cardiomyocytes via promotion of STUB1/CHIP-mediated ubiquitination and degradation of ICER-type isoforms of CREM (PubMed:20724525).</text>
</comment>
<comment type="subunit">
    <text evidence="2">Forms a ternary complex with IGFR1 and ITGAV:ITGB3. Forms a ternary complex with IGFR1 and ITGA6:ITGB4. Forms a ternary complex with IGFBP3 and ALS.</text>
</comment>
<comment type="subcellular location">
    <subcellularLocation>
        <location evidence="1">Secreted</location>
    </subcellularLocation>
</comment>
<comment type="alternative products">
    <event type="alternative splicing"/>
    <isoform>
        <id>P08025-1</id>
        <name>IGF-IA</name>
        <sequence type="displayed"/>
    </isoform>
    <isoform>
        <id>P08025-2</id>
        <name>IGF-IB</name>
        <sequence type="described" ref="VSP_012166"/>
    </isoform>
</comment>
<comment type="similarity">
    <text evidence="8">Belongs to the insulin family.</text>
</comment>
<comment type="sequence caution" evidence="8">
    <conflict type="erroneous initiation">
        <sequence resource="EMBL-CDS" id="AAA41385"/>
    </conflict>
    <text>Truncated N-terminus.</text>
</comment>
<comment type="sequence caution" evidence="8">
    <conflict type="erroneous initiation">
        <sequence resource="EMBL-CDS" id="AAA41386"/>
    </conflict>
    <text>Truncated N-terminus.</text>
</comment>
<comment type="sequence caution" evidence="8">
    <conflict type="erroneous initiation">
        <sequence resource="EMBL-CDS" id="AAA41387"/>
    </conflict>
    <text>Truncated N-terminus.</text>
</comment>
<evidence type="ECO:0000250" key="1">
    <source>
        <dbReference type="UniProtKB" id="P05017"/>
    </source>
</evidence>
<evidence type="ECO:0000250" key="2">
    <source>
        <dbReference type="UniProtKB" id="P05019"/>
    </source>
</evidence>
<evidence type="ECO:0000255" key="3"/>
<evidence type="ECO:0000256" key="4">
    <source>
        <dbReference type="SAM" id="MobiDB-lite"/>
    </source>
</evidence>
<evidence type="ECO:0000269" key="5">
    <source>
    </source>
</evidence>
<evidence type="ECO:0000269" key="6">
    <source>
    </source>
</evidence>
<evidence type="ECO:0000303" key="7">
    <source>
    </source>
</evidence>
<evidence type="ECO:0000305" key="8"/>
<evidence type="ECO:0000312" key="9">
    <source>
        <dbReference type="RGD" id="2868"/>
    </source>
</evidence>
<keyword id="KW-0025">Alternative splicing</keyword>
<keyword id="KW-0903">Direct protein sequencing</keyword>
<keyword id="KW-1015">Disulfide bond</keyword>
<keyword id="KW-0339">Growth factor</keyword>
<keyword id="KW-1185">Reference proteome</keyword>
<keyword id="KW-0964">Secreted</keyword>
<keyword id="KW-0732">Signal</keyword>